<sequence length="109" mass="11018">MSSFIDITNVISSHIEANLPAIASENVGSLANGAGIAYLGKYIGTGITMLAAGAVGLMQGFSTANAVQAVARNPEAQPKILSTMIVGLALAEAVAIYALIVSILIIFVA</sequence>
<protein>
    <recommendedName>
        <fullName evidence="2">ATP synthase subunit c</fullName>
    </recommendedName>
    <alternativeName>
        <fullName evidence="2">ATP synthase F(0) sector subunit c</fullName>
    </alternativeName>
    <alternativeName>
        <fullName evidence="2">F-type ATPase subunit c</fullName>
        <shortName evidence="2">F-ATPase subunit c</shortName>
    </alternativeName>
    <alternativeName>
        <fullName evidence="2">Lipid-binding protein</fullName>
    </alternativeName>
</protein>
<gene>
    <name evidence="2" type="primary">atpE</name>
    <name type="ordered locus">UU136</name>
</gene>
<comment type="function">
    <text evidence="2">F(1)F(0) ATP synthase produces ATP from ADP in the presence of a proton or sodium gradient. F-type ATPases consist of two structural domains, F(1) containing the extramembraneous catalytic core and F(0) containing the membrane proton channel, linked together by a central stalk and a peripheral stalk. During catalysis, ATP synthesis in the catalytic domain of F(1) is coupled via a rotary mechanism of the central stalk subunits to proton translocation.</text>
</comment>
<comment type="function">
    <text evidence="2">Key component of the F(0) channel; it plays a direct role in translocation across the membrane. A homomeric c-ring of between 10-14 subunits forms the central stalk rotor element with the F(1) delta and epsilon subunits.</text>
</comment>
<comment type="subunit">
    <text evidence="2">F-type ATPases have 2 components, F(1) - the catalytic core - and F(0) - the membrane proton channel. F(1) has five subunits: alpha(3), beta(3), gamma(1), delta(1), epsilon(1). F(0) has three main subunits: a(1), b(2) and c(10-14). The alpha and beta chains form an alternating ring which encloses part of the gamma chain. F(1) is attached to F(0) by a central stalk formed by the gamma and epsilon chains, while a peripheral stalk is formed by the delta and b chains.</text>
</comment>
<comment type="subcellular location">
    <subcellularLocation>
        <location evidence="2">Cell membrane</location>
        <topology evidence="2">Multi-pass membrane protein</topology>
    </subcellularLocation>
</comment>
<comment type="miscellaneous">
    <text evidence="1">Dicyclohexylcarbodiimide (DCDD) binding to the active glutamate residue inhibits ATPase in vitro.</text>
</comment>
<comment type="similarity">
    <text evidence="2">Belongs to the ATPase C chain family.</text>
</comment>
<name>ATPL_UREPA</name>
<keyword id="KW-0066">ATP synthesis</keyword>
<keyword id="KW-1003">Cell membrane</keyword>
<keyword id="KW-0138">CF(0)</keyword>
<keyword id="KW-0375">Hydrogen ion transport</keyword>
<keyword id="KW-0406">Ion transport</keyword>
<keyword id="KW-0446">Lipid-binding</keyword>
<keyword id="KW-0472">Membrane</keyword>
<keyword id="KW-1185">Reference proteome</keyword>
<keyword id="KW-0812">Transmembrane</keyword>
<keyword id="KW-1133">Transmembrane helix</keyword>
<keyword id="KW-0813">Transport</keyword>
<proteinExistence type="inferred from homology"/>
<reference key="1">
    <citation type="journal article" date="2000" name="Nature">
        <title>The complete sequence of the mucosal pathogen Ureaplasma urealyticum.</title>
        <authorList>
            <person name="Glass J.I."/>
            <person name="Lefkowitz E.J."/>
            <person name="Glass J.S."/>
            <person name="Heiner C.R."/>
            <person name="Chen E.Y."/>
            <person name="Cassell G.H."/>
        </authorList>
    </citation>
    <scope>NUCLEOTIDE SEQUENCE [LARGE SCALE GENOMIC DNA]</scope>
    <source>
        <strain>ATCC 700970</strain>
    </source>
</reference>
<evidence type="ECO:0000250" key="1"/>
<evidence type="ECO:0000255" key="2">
    <source>
        <dbReference type="HAMAP-Rule" id="MF_01396"/>
    </source>
</evidence>
<accession>Q9PR08</accession>
<organism>
    <name type="scientific">Ureaplasma parvum serovar 3 (strain ATCC 700970)</name>
    <dbReference type="NCBI Taxonomy" id="273119"/>
    <lineage>
        <taxon>Bacteria</taxon>
        <taxon>Bacillati</taxon>
        <taxon>Mycoplasmatota</taxon>
        <taxon>Mycoplasmoidales</taxon>
        <taxon>Mycoplasmoidaceae</taxon>
        <taxon>Ureaplasma</taxon>
    </lineage>
</organism>
<feature type="chain" id="PRO_0000112175" description="ATP synthase subunit c">
    <location>
        <begin position="1"/>
        <end position="109"/>
    </location>
</feature>
<feature type="transmembrane region" description="Helical" evidence="2">
    <location>
        <begin position="42"/>
        <end position="62"/>
    </location>
</feature>
<feature type="transmembrane region" description="Helical" evidence="2">
    <location>
        <begin position="88"/>
        <end position="108"/>
    </location>
</feature>
<feature type="site" description="Reversibly protonated during proton transport" evidence="2">
    <location>
        <position position="92"/>
    </location>
</feature>
<dbReference type="EMBL" id="AF222894">
    <property type="protein sequence ID" value="AAF30542.1"/>
    <property type="molecule type" value="Genomic_DNA"/>
</dbReference>
<dbReference type="RefSeq" id="WP_006688882.1">
    <property type="nucleotide sequence ID" value="NC_002162.1"/>
</dbReference>
<dbReference type="SMR" id="Q9PR08"/>
<dbReference type="STRING" id="273119.UU136"/>
<dbReference type="EnsemblBacteria" id="AAF30542">
    <property type="protein sequence ID" value="AAF30542"/>
    <property type="gene ID" value="UU136"/>
</dbReference>
<dbReference type="GeneID" id="29672138"/>
<dbReference type="KEGG" id="uur:UU136"/>
<dbReference type="eggNOG" id="COG0636">
    <property type="taxonomic scope" value="Bacteria"/>
</dbReference>
<dbReference type="HOGENOM" id="CLU_2182821_0_0_14"/>
<dbReference type="OrthoDB" id="3183855at2"/>
<dbReference type="Proteomes" id="UP000000423">
    <property type="component" value="Chromosome"/>
</dbReference>
<dbReference type="GO" id="GO:0005886">
    <property type="term" value="C:plasma membrane"/>
    <property type="evidence" value="ECO:0007669"/>
    <property type="project" value="UniProtKB-SubCell"/>
</dbReference>
<dbReference type="GO" id="GO:0045259">
    <property type="term" value="C:proton-transporting ATP synthase complex"/>
    <property type="evidence" value="ECO:0007669"/>
    <property type="project" value="UniProtKB-KW"/>
</dbReference>
<dbReference type="GO" id="GO:0033177">
    <property type="term" value="C:proton-transporting two-sector ATPase complex, proton-transporting domain"/>
    <property type="evidence" value="ECO:0007669"/>
    <property type="project" value="InterPro"/>
</dbReference>
<dbReference type="GO" id="GO:0008289">
    <property type="term" value="F:lipid binding"/>
    <property type="evidence" value="ECO:0007669"/>
    <property type="project" value="UniProtKB-KW"/>
</dbReference>
<dbReference type="GO" id="GO:0046933">
    <property type="term" value="F:proton-transporting ATP synthase activity, rotational mechanism"/>
    <property type="evidence" value="ECO:0007669"/>
    <property type="project" value="UniProtKB-UniRule"/>
</dbReference>
<dbReference type="CDD" id="cd18184">
    <property type="entry name" value="ATP-synt_Fo_c_NaATPase"/>
    <property type="match status" value="1"/>
</dbReference>
<dbReference type="Gene3D" id="1.20.20.10">
    <property type="entry name" value="F1F0 ATP synthase subunit C"/>
    <property type="match status" value="1"/>
</dbReference>
<dbReference type="HAMAP" id="MF_01396">
    <property type="entry name" value="ATP_synth_c_bact"/>
    <property type="match status" value="1"/>
</dbReference>
<dbReference type="InterPro" id="IPR000454">
    <property type="entry name" value="ATP_synth_F0_csu"/>
</dbReference>
<dbReference type="InterPro" id="IPR020537">
    <property type="entry name" value="ATP_synth_F0_csu_DDCD_BS"/>
</dbReference>
<dbReference type="InterPro" id="IPR038662">
    <property type="entry name" value="ATP_synth_F0_csu_sf"/>
</dbReference>
<dbReference type="InterPro" id="IPR002379">
    <property type="entry name" value="ATPase_proteolipid_c-like_dom"/>
</dbReference>
<dbReference type="InterPro" id="IPR035921">
    <property type="entry name" value="F/V-ATP_Csub_sf"/>
</dbReference>
<dbReference type="PANTHER" id="PTHR10031">
    <property type="entry name" value="ATP SYNTHASE LIPID-BINDING PROTEIN, MITOCHONDRIAL"/>
    <property type="match status" value="1"/>
</dbReference>
<dbReference type="PANTHER" id="PTHR10031:SF0">
    <property type="entry name" value="ATPASE PROTEIN 9"/>
    <property type="match status" value="1"/>
</dbReference>
<dbReference type="Pfam" id="PF00137">
    <property type="entry name" value="ATP-synt_C"/>
    <property type="match status" value="1"/>
</dbReference>
<dbReference type="PRINTS" id="PR00124">
    <property type="entry name" value="ATPASEC"/>
</dbReference>
<dbReference type="SUPFAM" id="SSF81333">
    <property type="entry name" value="F1F0 ATP synthase subunit C"/>
    <property type="match status" value="1"/>
</dbReference>
<dbReference type="PROSITE" id="PS00605">
    <property type="entry name" value="ATPASE_C"/>
    <property type="match status" value="1"/>
</dbReference>